<name>NUSB_LATSS</name>
<accession>Q38XV0</accession>
<sequence>MPNFNRHQIRQAAFQVLFTLNANQSLELEDAYQAVLTMDQFDAEEVTPVEVPAYLAFLVSGVTENQAALDAALTPYLKKGWQLSRLAKPDLIILRLGLFEMQNSTEAPAKVALNEALELAKQFTDDQAKGFINGVLSKFVEA</sequence>
<proteinExistence type="inferred from homology"/>
<reference key="1">
    <citation type="journal article" date="2005" name="Nat. Biotechnol.">
        <title>The complete genome sequence of the meat-borne lactic acid bacterium Lactobacillus sakei 23K.</title>
        <authorList>
            <person name="Chaillou S."/>
            <person name="Champomier-Verges M.-C."/>
            <person name="Cornet M."/>
            <person name="Crutz-Le Coq A.-M."/>
            <person name="Dudez A.-M."/>
            <person name="Martin V."/>
            <person name="Beaufils S."/>
            <person name="Darbon-Rongere E."/>
            <person name="Bossy R."/>
            <person name="Loux V."/>
            <person name="Zagorec M."/>
        </authorList>
    </citation>
    <scope>NUCLEOTIDE SEQUENCE [LARGE SCALE GENOMIC DNA]</scope>
    <source>
        <strain>23K</strain>
    </source>
</reference>
<feature type="chain" id="PRO_0000265534" description="Transcription antitermination protein NusB">
    <location>
        <begin position="1"/>
        <end position="142"/>
    </location>
</feature>
<protein>
    <recommendedName>
        <fullName evidence="1">Transcription antitermination protein NusB</fullName>
    </recommendedName>
    <alternativeName>
        <fullName evidence="1">Antitermination factor NusB</fullName>
    </alternativeName>
</protein>
<dbReference type="EMBL" id="CR936503">
    <property type="protein sequence ID" value="CAI54979.1"/>
    <property type="molecule type" value="Genomic_DNA"/>
</dbReference>
<dbReference type="RefSeq" id="WP_011374384.1">
    <property type="nucleotide sequence ID" value="NC_007576.1"/>
</dbReference>
<dbReference type="SMR" id="Q38XV0"/>
<dbReference type="STRING" id="314315.LCA_0675"/>
<dbReference type="GeneID" id="57133529"/>
<dbReference type="KEGG" id="lsa:LCA_0675"/>
<dbReference type="eggNOG" id="COG0781">
    <property type="taxonomic scope" value="Bacteria"/>
</dbReference>
<dbReference type="HOGENOM" id="CLU_087843_3_2_9"/>
<dbReference type="OrthoDB" id="9811381at2"/>
<dbReference type="Proteomes" id="UP000002707">
    <property type="component" value="Chromosome"/>
</dbReference>
<dbReference type="GO" id="GO:0005829">
    <property type="term" value="C:cytosol"/>
    <property type="evidence" value="ECO:0007669"/>
    <property type="project" value="TreeGrafter"/>
</dbReference>
<dbReference type="GO" id="GO:0003723">
    <property type="term" value="F:RNA binding"/>
    <property type="evidence" value="ECO:0007669"/>
    <property type="project" value="UniProtKB-UniRule"/>
</dbReference>
<dbReference type="GO" id="GO:0006353">
    <property type="term" value="P:DNA-templated transcription termination"/>
    <property type="evidence" value="ECO:0007669"/>
    <property type="project" value="UniProtKB-UniRule"/>
</dbReference>
<dbReference type="GO" id="GO:0031564">
    <property type="term" value="P:transcription antitermination"/>
    <property type="evidence" value="ECO:0007669"/>
    <property type="project" value="UniProtKB-KW"/>
</dbReference>
<dbReference type="Gene3D" id="1.10.940.10">
    <property type="entry name" value="NusB-like"/>
    <property type="match status" value="1"/>
</dbReference>
<dbReference type="HAMAP" id="MF_00073">
    <property type="entry name" value="NusB"/>
    <property type="match status" value="1"/>
</dbReference>
<dbReference type="InterPro" id="IPR035926">
    <property type="entry name" value="NusB-like_sf"/>
</dbReference>
<dbReference type="InterPro" id="IPR011605">
    <property type="entry name" value="NusB_fam"/>
</dbReference>
<dbReference type="InterPro" id="IPR006027">
    <property type="entry name" value="NusB_RsmB_TIM44"/>
</dbReference>
<dbReference type="NCBIfam" id="TIGR01951">
    <property type="entry name" value="nusB"/>
    <property type="match status" value="1"/>
</dbReference>
<dbReference type="NCBIfam" id="NF001223">
    <property type="entry name" value="PRK00202.1-1"/>
    <property type="match status" value="1"/>
</dbReference>
<dbReference type="PANTHER" id="PTHR11078:SF3">
    <property type="entry name" value="ANTITERMINATION NUSB DOMAIN-CONTAINING PROTEIN"/>
    <property type="match status" value="1"/>
</dbReference>
<dbReference type="PANTHER" id="PTHR11078">
    <property type="entry name" value="N UTILIZATION SUBSTANCE PROTEIN B-RELATED"/>
    <property type="match status" value="1"/>
</dbReference>
<dbReference type="Pfam" id="PF01029">
    <property type="entry name" value="NusB"/>
    <property type="match status" value="1"/>
</dbReference>
<dbReference type="SUPFAM" id="SSF48013">
    <property type="entry name" value="NusB-like"/>
    <property type="match status" value="1"/>
</dbReference>
<keyword id="KW-1185">Reference proteome</keyword>
<keyword id="KW-0694">RNA-binding</keyword>
<keyword id="KW-0804">Transcription</keyword>
<keyword id="KW-0889">Transcription antitermination</keyword>
<keyword id="KW-0805">Transcription regulation</keyword>
<organism>
    <name type="scientific">Latilactobacillus sakei subsp. sakei (strain 23K)</name>
    <name type="common">Lactobacillus sakei subsp. sakei</name>
    <dbReference type="NCBI Taxonomy" id="314315"/>
    <lineage>
        <taxon>Bacteria</taxon>
        <taxon>Bacillati</taxon>
        <taxon>Bacillota</taxon>
        <taxon>Bacilli</taxon>
        <taxon>Lactobacillales</taxon>
        <taxon>Lactobacillaceae</taxon>
        <taxon>Latilactobacillus</taxon>
    </lineage>
</organism>
<comment type="function">
    <text evidence="1">Involved in transcription antitermination. Required for transcription of ribosomal RNA (rRNA) genes. Binds specifically to the boxA antiterminator sequence of the ribosomal RNA (rrn) operons.</text>
</comment>
<comment type="similarity">
    <text evidence="1">Belongs to the NusB family.</text>
</comment>
<gene>
    <name evidence="1" type="primary">nusB</name>
    <name type="ordered locus">LCA_0675</name>
</gene>
<evidence type="ECO:0000255" key="1">
    <source>
        <dbReference type="HAMAP-Rule" id="MF_00073"/>
    </source>
</evidence>